<accession>Q9WWW8</accession>
<comment type="function">
    <text evidence="1">Catalyzes the ATP-dependent conversion of 7-carboxy-7-deazaguanine (CDG) to 7-cyano-7-deazaguanine (preQ(0)).</text>
</comment>
<comment type="catalytic activity">
    <reaction evidence="1">
        <text>7-carboxy-7-deazaguanine + NH4(+) + ATP = 7-cyano-7-deazaguanine + ADP + phosphate + H2O + H(+)</text>
        <dbReference type="Rhea" id="RHEA:27982"/>
        <dbReference type="ChEBI" id="CHEBI:15377"/>
        <dbReference type="ChEBI" id="CHEBI:15378"/>
        <dbReference type="ChEBI" id="CHEBI:28938"/>
        <dbReference type="ChEBI" id="CHEBI:30616"/>
        <dbReference type="ChEBI" id="CHEBI:43474"/>
        <dbReference type="ChEBI" id="CHEBI:45075"/>
        <dbReference type="ChEBI" id="CHEBI:61036"/>
        <dbReference type="ChEBI" id="CHEBI:456216"/>
        <dbReference type="EC" id="6.3.4.20"/>
    </reaction>
</comment>
<comment type="cofactor">
    <cofactor evidence="1">
        <name>Zn(2+)</name>
        <dbReference type="ChEBI" id="CHEBI:29105"/>
    </cofactor>
    <text evidence="1">Binds 1 zinc ion per subunit.</text>
</comment>
<comment type="pathway">
    <text evidence="1">Purine metabolism; 7-cyano-7-deazaguanine biosynthesis.</text>
</comment>
<comment type="similarity">
    <text evidence="1">Belongs to the QueC family.</text>
</comment>
<name>QUEC_PSEPU</name>
<feature type="chain" id="PRO_0000246888" description="7-cyano-7-deazaguanine synthase">
    <location>
        <begin position="1"/>
        <end position="224"/>
    </location>
</feature>
<feature type="binding site" evidence="1">
    <location>
        <begin position="10"/>
        <end position="20"/>
    </location>
    <ligand>
        <name>ATP</name>
        <dbReference type="ChEBI" id="CHEBI:30616"/>
    </ligand>
</feature>
<feature type="binding site" evidence="1">
    <location>
        <position position="189"/>
    </location>
    <ligand>
        <name>Zn(2+)</name>
        <dbReference type="ChEBI" id="CHEBI:29105"/>
    </ligand>
</feature>
<feature type="binding site" evidence="1">
    <location>
        <position position="199"/>
    </location>
    <ligand>
        <name>Zn(2+)</name>
        <dbReference type="ChEBI" id="CHEBI:29105"/>
    </ligand>
</feature>
<feature type="binding site" evidence="1">
    <location>
        <position position="202"/>
    </location>
    <ligand>
        <name>Zn(2+)</name>
        <dbReference type="ChEBI" id="CHEBI:29105"/>
    </ligand>
</feature>
<feature type="binding site" evidence="1">
    <location>
        <position position="205"/>
    </location>
    <ligand>
        <name>Zn(2+)</name>
        <dbReference type="ChEBI" id="CHEBI:29105"/>
    </ligand>
</feature>
<reference key="1">
    <citation type="journal article" date="1996" name="J. Bacteriol.">
        <title>The Pseudomonas putida peptidoglycan-associated outer membrane lipoprotein is involved in maintenance of the integrity of the cell cell envelope.</title>
        <authorList>
            <person name="Rodriguez-Herva J.J."/>
            <person name="Ramos-Gonzalez M.I."/>
            <person name="Ramos J.L."/>
        </authorList>
    </citation>
    <scope>NUCLEOTIDE SEQUENCE [GENOMIC DNA]</scope>
    <source>
        <strain>ATCC 33015 / DSM 3931 / JCM 6156 / NCIMB 12182 / mt-2</strain>
    </source>
</reference>
<sequence length="224" mass="23961">MTEKRAVILLSGGLDSATVVAMAKAEGYSCYTMSFDYGQRHRAELNAAARVARDLGVVEHKVIGLNLDGIGGSALTDSSIDVPEAPGEGIPVTYVPARNTVFLSLALGWAEVLEARDIFIGVNAVDYSGYPDCRPEFVEAFERMANLATKAGVEGQGFRIQAPLQNMSKAQIVQAGMARGVDYSLTVSCYQADDDGRACGKCDSCRLRADGFKAAGIEDPTRYF</sequence>
<dbReference type="EC" id="6.3.4.20" evidence="1"/>
<dbReference type="EMBL" id="X74218">
    <property type="protein sequence ID" value="CAB50783.1"/>
    <property type="molecule type" value="Genomic_DNA"/>
</dbReference>
<dbReference type="RefSeq" id="WP_010952369.1">
    <property type="nucleotide sequence ID" value="NZ_SPUU01000024.1"/>
</dbReference>
<dbReference type="SMR" id="Q9WWW8"/>
<dbReference type="eggNOG" id="COG0603">
    <property type="taxonomic scope" value="Bacteria"/>
</dbReference>
<dbReference type="OMA" id="QDPIKYV"/>
<dbReference type="UniPathway" id="UPA00391"/>
<dbReference type="GO" id="GO:0005524">
    <property type="term" value="F:ATP binding"/>
    <property type="evidence" value="ECO:0007669"/>
    <property type="project" value="UniProtKB-UniRule"/>
</dbReference>
<dbReference type="GO" id="GO:0016879">
    <property type="term" value="F:ligase activity, forming carbon-nitrogen bonds"/>
    <property type="evidence" value="ECO:0007669"/>
    <property type="project" value="UniProtKB-UniRule"/>
</dbReference>
<dbReference type="GO" id="GO:0008270">
    <property type="term" value="F:zinc ion binding"/>
    <property type="evidence" value="ECO:0007669"/>
    <property type="project" value="UniProtKB-UniRule"/>
</dbReference>
<dbReference type="GO" id="GO:0008616">
    <property type="term" value="P:queuosine biosynthetic process"/>
    <property type="evidence" value="ECO:0007669"/>
    <property type="project" value="UniProtKB-UniRule"/>
</dbReference>
<dbReference type="CDD" id="cd01995">
    <property type="entry name" value="QueC-like"/>
    <property type="match status" value="1"/>
</dbReference>
<dbReference type="FunFam" id="3.40.50.620:FF:000131">
    <property type="entry name" value="7-cyano-7-deazaguanine synthase"/>
    <property type="match status" value="1"/>
</dbReference>
<dbReference type="Gene3D" id="3.40.50.620">
    <property type="entry name" value="HUPs"/>
    <property type="match status" value="1"/>
</dbReference>
<dbReference type="HAMAP" id="MF_01633">
    <property type="entry name" value="QueC"/>
    <property type="match status" value="1"/>
</dbReference>
<dbReference type="InterPro" id="IPR018317">
    <property type="entry name" value="QueC"/>
</dbReference>
<dbReference type="InterPro" id="IPR014729">
    <property type="entry name" value="Rossmann-like_a/b/a_fold"/>
</dbReference>
<dbReference type="NCBIfam" id="TIGR00364">
    <property type="entry name" value="7-cyano-7-deazaguanine synthase QueC"/>
    <property type="match status" value="1"/>
</dbReference>
<dbReference type="PANTHER" id="PTHR42914">
    <property type="entry name" value="7-CYANO-7-DEAZAGUANINE SYNTHASE"/>
    <property type="match status" value="1"/>
</dbReference>
<dbReference type="PANTHER" id="PTHR42914:SF1">
    <property type="entry name" value="7-CYANO-7-DEAZAGUANINE SYNTHASE"/>
    <property type="match status" value="1"/>
</dbReference>
<dbReference type="Pfam" id="PF06508">
    <property type="entry name" value="QueC"/>
    <property type="match status" value="1"/>
</dbReference>
<dbReference type="PIRSF" id="PIRSF006293">
    <property type="entry name" value="ExsB"/>
    <property type="match status" value="1"/>
</dbReference>
<dbReference type="SUPFAM" id="SSF52402">
    <property type="entry name" value="Adenine nucleotide alpha hydrolases-like"/>
    <property type="match status" value="1"/>
</dbReference>
<proteinExistence type="inferred from homology"/>
<gene>
    <name evidence="1" type="primary">queC</name>
</gene>
<organism>
    <name type="scientific">Pseudomonas putida</name>
    <name type="common">Arthrobacter siderocapsulatus</name>
    <dbReference type="NCBI Taxonomy" id="303"/>
    <lineage>
        <taxon>Bacteria</taxon>
        <taxon>Pseudomonadati</taxon>
        <taxon>Pseudomonadota</taxon>
        <taxon>Gammaproteobacteria</taxon>
        <taxon>Pseudomonadales</taxon>
        <taxon>Pseudomonadaceae</taxon>
        <taxon>Pseudomonas</taxon>
    </lineage>
</organism>
<evidence type="ECO:0000255" key="1">
    <source>
        <dbReference type="HAMAP-Rule" id="MF_01633"/>
    </source>
</evidence>
<keyword id="KW-0067">ATP-binding</keyword>
<keyword id="KW-0436">Ligase</keyword>
<keyword id="KW-0479">Metal-binding</keyword>
<keyword id="KW-0547">Nucleotide-binding</keyword>
<keyword id="KW-0671">Queuosine biosynthesis</keyword>
<keyword id="KW-0862">Zinc</keyword>
<protein>
    <recommendedName>
        <fullName evidence="1">7-cyano-7-deazaguanine synthase</fullName>
        <ecNumber evidence="1">6.3.4.20</ecNumber>
    </recommendedName>
    <alternativeName>
        <fullName evidence="1">7-cyano-7-carbaguanine synthase</fullName>
    </alternativeName>
    <alternativeName>
        <fullName evidence="1">PreQ(0) synthase</fullName>
    </alternativeName>
    <alternativeName>
        <fullName evidence="1">Queuosine biosynthesis protein QueC</fullName>
    </alternativeName>
</protein>